<protein>
    <recommendedName>
        <fullName>B box and SPRY domain-containing protein</fullName>
    </recommendedName>
    <alternativeName>
        <fullName>Zetin-1</fullName>
    </alternativeName>
</protein>
<name>BSPRY_RAT</name>
<comment type="function">
    <text evidence="1">May regulate epithelial calcium transport by inhibiting TRPV5 activity.</text>
</comment>
<comment type="subunit">
    <text evidence="1 4">Interacts with TRPV5 and TRPV6 (By similarity). Interacts with YWHAZ/14-3-3 protein zeta.</text>
</comment>
<comment type="subcellular location">
    <subcellularLocation>
        <location evidence="4">Cytoplasm</location>
    </subcellularLocation>
    <subcellularLocation>
        <location evidence="4">Membrane</location>
        <topology evidence="4">Peripheral membrane protein</topology>
    </subcellularLocation>
</comment>
<comment type="tissue specificity">
    <text evidence="4">Predominantly expressed in testis. Expressed in brain at low levels.</text>
</comment>
<keyword id="KW-0106">Calcium</keyword>
<keyword id="KW-0109">Calcium transport</keyword>
<keyword id="KW-0963">Cytoplasm</keyword>
<keyword id="KW-0406">Ion transport</keyword>
<keyword id="KW-0472">Membrane</keyword>
<keyword id="KW-0479">Metal-binding</keyword>
<keyword id="KW-1185">Reference proteome</keyword>
<keyword id="KW-0813">Transport</keyword>
<keyword id="KW-0862">Zinc</keyword>
<keyword id="KW-0863">Zinc-finger</keyword>
<feature type="chain" id="PRO_0000244259" description="B box and SPRY domain-containing protein">
    <location>
        <begin position="1"/>
        <end position="448"/>
    </location>
</feature>
<feature type="domain" description="B30.2/SPRY" evidence="2">
    <location>
        <begin position="257"/>
        <end position="448"/>
    </location>
</feature>
<feature type="zinc finger region" description="B box-type">
    <location>
        <begin position="63"/>
        <end position="111"/>
    </location>
</feature>
<feature type="region of interest" description="Disordered" evidence="3">
    <location>
        <begin position="1"/>
        <end position="58"/>
    </location>
</feature>
<feature type="compositionally biased region" description="Low complexity" evidence="3">
    <location>
        <begin position="1"/>
        <end position="18"/>
    </location>
</feature>
<feature type="compositionally biased region" description="Pro residues" evidence="3">
    <location>
        <begin position="19"/>
        <end position="51"/>
    </location>
</feature>
<feature type="sequence conflict" description="In Ref. 2; AAF72164." evidence="5" ref="2">
    <original>DDPE</original>
    <variation>VTQQ</variation>
    <location>
        <begin position="310"/>
        <end position="313"/>
    </location>
</feature>
<proteinExistence type="evidence at protein level"/>
<organism>
    <name type="scientific">Rattus norvegicus</name>
    <name type="common">Rat</name>
    <dbReference type="NCBI Taxonomy" id="10116"/>
    <lineage>
        <taxon>Eukaryota</taxon>
        <taxon>Metazoa</taxon>
        <taxon>Chordata</taxon>
        <taxon>Craniata</taxon>
        <taxon>Vertebrata</taxon>
        <taxon>Euteleostomi</taxon>
        <taxon>Mammalia</taxon>
        <taxon>Eutheria</taxon>
        <taxon>Euarchontoglires</taxon>
        <taxon>Glires</taxon>
        <taxon>Rodentia</taxon>
        <taxon>Myomorpha</taxon>
        <taxon>Muroidea</taxon>
        <taxon>Muridae</taxon>
        <taxon>Murinae</taxon>
        <taxon>Rattus</taxon>
    </lineage>
</organism>
<dbReference type="EMBL" id="BC062051">
    <property type="protein sequence ID" value="AAH62051.1"/>
    <property type="molecule type" value="mRNA"/>
</dbReference>
<dbReference type="EMBL" id="BC095901">
    <property type="protein sequence ID" value="AAH95901.1"/>
    <property type="molecule type" value="mRNA"/>
</dbReference>
<dbReference type="EMBL" id="CK598656">
    <property type="status" value="NOT_ANNOTATED_CDS"/>
    <property type="molecule type" value="mRNA"/>
</dbReference>
<dbReference type="EMBL" id="AF245225">
    <property type="protein sequence ID" value="AAF72164.1"/>
    <property type="molecule type" value="mRNA"/>
</dbReference>
<dbReference type="RefSeq" id="NP_071597.2">
    <property type="nucleotide sequence ID" value="NM_022261.3"/>
</dbReference>
<dbReference type="SMR" id="Q6P6S3"/>
<dbReference type="FunCoup" id="Q6P6S3">
    <property type="interactions" value="189"/>
</dbReference>
<dbReference type="MINT" id="Q6P6S3"/>
<dbReference type="STRING" id="10116.ENSRNOP00000020366"/>
<dbReference type="iPTMnet" id="Q6P6S3"/>
<dbReference type="PhosphoSitePlus" id="Q6P6S3"/>
<dbReference type="PaxDb" id="10116-ENSRNOP00000020366"/>
<dbReference type="Ensembl" id="ENSRNOT00000020366.6">
    <property type="protein sequence ID" value="ENSRNOP00000020366.5"/>
    <property type="gene ID" value="ENSRNOG00000015105.6"/>
</dbReference>
<dbReference type="GeneID" id="64027"/>
<dbReference type="KEGG" id="rno:64027"/>
<dbReference type="AGR" id="RGD:708400"/>
<dbReference type="CTD" id="54836"/>
<dbReference type="RGD" id="708400">
    <property type="gene designation" value="Bspry"/>
</dbReference>
<dbReference type="eggNOG" id="KOG2177">
    <property type="taxonomic scope" value="Eukaryota"/>
</dbReference>
<dbReference type="GeneTree" id="ENSGT00940000161096"/>
<dbReference type="HOGENOM" id="CLU_050384_0_0_1"/>
<dbReference type="InParanoid" id="Q6P6S3"/>
<dbReference type="OMA" id="NEARLGH"/>
<dbReference type="OrthoDB" id="9875313at2759"/>
<dbReference type="PhylomeDB" id="Q6P6S3"/>
<dbReference type="TreeFam" id="TF351014"/>
<dbReference type="PRO" id="PR:Q6P6S3"/>
<dbReference type="Proteomes" id="UP000002494">
    <property type="component" value="Chromosome 5"/>
</dbReference>
<dbReference type="Bgee" id="ENSRNOG00000015105">
    <property type="expression patterns" value="Expressed in testis and 19 other cell types or tissues"/>
</dbReference>
<dbReference type="ExpressionAtlas" id="Q6P6S3">
    <property type="expression patterns" value="baseline and differential"/>
</dbReference>
<dbReference type="GO" id="GO:0031252">
    <property type="term" value="C:cell leading edge"/>
    <property type="evidence" value="ECO:0000314"/>
    <property type="project" value="RGD"/>
</dbReference>
<dbReference type="GO" id="GO:0005737">
    <property type="term" value="C:cytoplasm"/>
    <property type="evidence" value="ECO:0000318"/>
    <property type="project" value="GO_Central"/>
</dbReference>
<dbReference type="GO" id="GO:0016020">
    <property type="term" value="C:membrane"/>
    <property type="evidence" value="ECO:0007669"/>
    <property type="project" value="UniProtKB-SubCell"/>
</dbReference>
<dbReference type="GO" id="GO:0048471">
    <property type="term" value="C:perinuclear region of cytoplasm"/>
    <property type="evidence" value="ECO:0000314"/>
    <property type="project" value="RGD"/>
</dbReference>
<dbReference type="GO" id="GO:0061630">
    <property type="term" value="F:ubiquitin protein ligase activity"/>
    <property type="evidence" value="ECO:0000318"/>
    <property type="project" value="GO_Central"/>
</dbReference>
<dbReference type="GO" id="GO:0008270">
    <property type="term" value="F:zinc ion binding"/>
    <property type="evidence" value="ECO:0007669"/>
    <property type="project" value="UniProtKB-KW"/>
</dbReference>
<dbReference type="GO" id="GO:0006816">
    <property type="term" value="P:calcium ion transport"/>
    <property type="evidence" value="ECO:0007669"/>
    <property type="project" value="UniProtKB-KW"/>
</dbReference>
<dbReference type="GO" id="GO:1990830">
    <property type="term" value="P:cellular response to leukemia inhibitory factor"/>
    <property type="evidence" value="ECO:0000266"/>
    <property type="project" value="RGD"/>
</dbReference>
<dbReference type="GO" id="GO:0045087">
    <property type="term" value="P:innate immune response"/>
    <property type="evidence" value="ECO:0000318"/>
    <property type="project" value="GO_Central"/>
</dbReference>
<dbReference type="Gene3D" id="2.60.120.920">
    <property type="match status" value="1"/>
</dbReference>
<dbReference type="Gene3D" id="3.30.160.60">
    <property type="entry name" value="Classic Zinc Finger"/>
    <property type="match status" value="1"/>
</dbReference>
<dbReference type="InterPro" id="IPR001870">
    <property type="entry name" value="B30.2/SPRY"/>
</dbReference>
<dbReference type="InterPro" id="IPR043136">
    <property type="entry name" value="B30.2/SPRY_sf"/>
</dbReference>
<dbReference type="InterPro" id="IPR003879">
    <property type="entry name" value="Butyrophylin_SPRY"/>
</dbReference>
<dbReference type="InterPro" id="IPR013320">
    <property type="entry name" value="ConA-like_dom_sf"/>
</dbReference>
<dbReference type="InterPro" id="IPR006574">
    <property type="entry name" value="PRY"/>
</dbReference>
<dbReference type="InterPro" id="IPR003877">
    <property type="entry name" value="SPRY_dom"/>
</dbReference>
<dbReference type="InterPro" id="IPR050143">
    <property type="entry name" value="TRIM/RBCC"/>
</dbReference>
<dbReference type="PANTHER" id="PTHR24103">
    <property type="entry name" value="E3 UBIQUITIN-PROTEIN LIGASE TRIM"/>
    <property type="match status" value="1"/>
</dbReference>
<dbReference type="Pfam" id="PF13765">
    <property type="entry name" value="PRY"/>
    <property type="match status" value="1"/>
</dbReference>
<dbReference type="Pfam" id="PF00622">
    <property type="entry name" value="SPRY"/>
    <property type="match status" value="1"/>
</dbReference>
<dbReference type="PRINTS" id="PR01407">
    <property type="entry name" value="BUTYPHLNCDUF"/>
</dbReference>
<dbReference type="SMART" id="SM00589">
    <property type="entry name" value="PRY"/>
    <property type="match status" value="1"/>
</dbReference>
<dbReference type="SMART" id="SM00449">
    <property type="entry name" value="SPRY"/>
    <property type="match status" value="1"/>
</dbReference>
<dbReference type="SUPFAM" id="SSF57845">
    <property type="entry name" value="B-box zinc-binding domain"/>
    <property type="match status" value="1"/>
</dbReference>
<dbReference type="SUPFAM" id="SSF49899">
    <property type="entry name" value="Concanavalin A-like lectins/glucanases"/>
    <property type="match status" value="1"/>
</dbReference>
<dbReference type="PROSITE" id="PS50188">
    <property type="entry name" value="B302_SPRY"/>
    <property type="match status" value="1"/>
</dbReference>
<evidence type="ECO:0000250" key="1"/>
<evidence type="ECO:0000255" key="2">
    <source>
        <dbReference type="PROSITE-ProRule" id="PRU00548"/>
    </source>
</evidence>
<evidence type="ECO:0000256" key="3">
    <source>
        <dbReference type="SAM" id="MobiDB-lite"/>
    </source>
</evidence>
<evidence type="ECO:0000269" key="4">
    <source>
    </source>
</evidence>
<evidence type="ECO:0000305" key="5"/>
<sequence>MSSDVSGTESGSESGPESVPEPVPEPGPEPESEPGPGPAPGPGPGPAPGPGPGLGREPGQRYQPCQLCPEHGKPLSWFCLSERRPVCATCAGFGGRCHRHRIRRAEEHAEELRNKIVDHCEKLQLQSAGITKYVAEVLQGKNQKAMIMANATREVIIQRLSLVRCLCESEEQRLLEQVHSEEERAHQCILTQRAHWDDKLRKLDSLRTSMVDMLTHLNDLQLIQMEQEILERAEEAEGILEPQESEKLSFNEKCAWSPLLTQLWATSVLGSLSGMEDVLIDERTVGPLLNLSEDRKTLTFNAKKSKVCSDDPERFDHWPNALAVNAFQTGLHAWAVNVKHSCAYKVGVASAQLPRKGSGSDCRLGHNAFSWVFSRYDQEFCFSHNGNHEPLALLRCPTQLGLLLDLQAGELIFYEPASGTVLHIHRESFPHRLFPVFAVADQVISIVC</sequence>
<gene>
    <name type="primary">Bspry</name>
</gene>
<accession>Q6P6S3</accession>
<accession>Q4VBG7</accession>
<accession>Q9JKB6</accession>
<reference key="1">
    <citation type="journal article" date="2004" name="Genome Res.">
        <title>The status, quality, and expansion of the NIH full-length cDNA project: the Mammalian Gene Collection (MGC).</title>
        <authorList>
            <consortium name="The MGC Project Team"/>
        </authorList>
    </citation>
    <scope>NUCLEOTIDE SEQUENCE [LARGE SCALE MRNA]</scope>
    <source>
        <tissue>Prostate</tissue>
        <tissue>Testis</tissue>
    </source>
</reference>
<reference key="2">
    <citation type="journal article" date="2003" name="Biochem. Biophys. Res. Commun.">
        <title>Characterization of zetin 1/rBSPRY, a novel binding partner of 14-3-3 proteins.</title>
        <authorList>
            <person name="Birkenfeld J."/>
            <person name="Kartmann B."/>
            <person name="Anliker B."/>
            <person name="Ono K."/>
            <person name="Schloetcke B."/>
            <person name="Betz H."/>
            <person name="Roth D."/>
        </authorList>
    </citation>
    <scope>NUCLEOTIDE SEQUENCE [MRNA] OF 146-448</scope>
    <scope>TISSUE SPECIFICITY</scope>
    <scope>SUBCELLULAR LOCATION</scope>
    <scope>INTERACTION WITH YWHAZ</scope>
    <source>
        <tissue>Brain</tissue>
    </source>
</reference>